<accession>A9A5I5</accession>
<proteinExistence type="inferred from homology"/>
<protein>
    <recommendedName>
        <fullName evidence="1">Large ribosomal subunit protein uL14</fullName>
    </recommendedName>
    <alternativeName>
        <fullName evidence="2">50S ribosomal protein L14</fullName>
    </alternativeName>
</protein>
<sequence>MAKQAGKGVEEFRPYVTKVIPVGANIVCADNSGAKILEVINVPRHRTRASRLPSASVGDFCNVVVKKGPAELRKQVYGAVIIRQKYPVRRLNGVRVCFEDNAAVLITPEGETKGTDIKGPVAAEASEKWPRVANLASMVV</sequence>
<feature type="chain" id="PRO_0000355851" description="Large ribosomal subunit protein uL14">
    <location>
        <begin position="1"/>
        <end position="140"/>
    </location>
</feature>
<comment type="function">
    <text evidence="1">Binds to 23S rRNA. Forms part of two intersubunit bridges in the 70S ribosome.</text>
</comment>
<comment type="subunit">
    <text evidence="1">Part of the 50S ribosomal subunit. Forms a cluster with proteins L3 and L24e, part of which may contact the 16S rRNA in 2 intersubunit bridges.</text>
</comment>
<comment type="similarity">
    <text evidence="1">Belongs to the universal ribosomal protein uL14 family.</text>
</comment>
<dbReference type="EMBL" id="CP000866">
    <property type="protein sequence ID" value="ABX12696.1"/>
    <property type="molecule type" value="Genomic_DNA"/>
</dbReference>
<dbReference type="RefSeq" id="WP_012215183.1">
    <property type="nucleotide sequence ID" value="NC_010085.1"/>
</dbReference>
<dbReference type="SMR" id="A9A5I5"/>
<dbReference type="FunCoup" id="A9A5I5">
    <property type="interactions" value="212"/>
</dbReference>
<dbReference type="STRING" id="436308.Nmar_0800"/>
<dbReference type="EnsemblBacteria" id="ABX12696">
    <property type="protein sequence ID" value="ABX12696"/>
    <property type="gene ID" value="Nmar_0800"/>
</dbReference>
<dbReference type="GeneID" id="5773784"/>
<dbReference type="KEGG" id="nmr:Nmar_0800"/>
<dbReference type="eggNOG" id="arCOG04095">
    <property type="taxonomic scope" value="Archaea"/>
</dbReference>
<dbReference type="HOGENOM" id="CLU_095071_3_0_2"/>
<dbReference type="InParanoid" id="A9A5I5"/>
<dbReference type="OrthoDB" id="23569at2157"/>
<dbReference type="PhylomeDB" id="A9A5I5"/>
<dbReference type="Proteomes" id="UP000000792">
    <property type="component" value="Chromosome"/>
</dbReference>
<dbReference type="GO" id="GO:0022625">
    <property type="term" value="C:cytosolic large ribosomal subunit"/>
    <property type="evidence" value="ECO:0000318"/>
    <property type="project" value="GO_Central"/>
</dbReference>
<dbReference type="GO" id="GO:0070180">
    <property type="term" value="F:large ribosomal subunit rRNA binding"/>
    <property type="evidence" value="ECO:0000318"/>
    <property type="project" value="GO_Central"/>
</dbReference>
<dbReference type="GO" id="GO:0003735">
    <property type="term" value="F:structural constituent of ribosome"/>
    <property type="evidence" value="ECO:0000318"/>
    <property type="project" value="GO_Central"/>
</dbReference>
<dbReference type="GO" id="GO:0006412">
    <property type="term" value="P:translation"/>
    <property type="evidence" value="ECO:0007669"/>
    <property type="project" value="UniProtKB-UniRule"/>
</dbReference>
<dbReference type="CDD" id="cd00337">
    <property type="entry name" value="Ribosomal_uL14"/>
    <property type="match status" value="1"/>
</dbReference>
<dbReference type="FunFam" id="2.40.150.20:FF:000007">
    <property type="entry name" value="50S ribosomal protein L14"/>
    <property type="match status" value="1"/>
</dbReference>
<dbReference type="Gene3D" id="2.40.150.20">
    <property type="entry name" value="Ribosomal protein L14"/>
    <property type="match status" value="1"/>
</dbReference>
<dbReference type="HAMAP" id="MF_01367">
    <property type="entry name" value="Ribosomal_uL14"/>
    <property type="match status" value="1"/>
</dbReference>
<dbReference type="InterPro" id="IPR000218">
    <property type="entry name" value="Ribosomal_uL14"/>
</dbReference>
<dbReference type="InterPro" id="IPR019972">
    <property type="entry name" value="Ribosomal_uL14_CS"/>
</dbReference>
<dbReference type="InterPro" id="IPR036853">
    <property type="entry name" value="Ribosomal_uL14_sf"/>
</dbReference>
<dbReference type="NCBIfam" id="NF006344">
    <property type="entry name" value="PRK08571.1"/>
    <property type="match status" value="1"/>
</dbReference>
<dbReference type="PANTHER" id="PTHR11761">
    <property type="entry name" value="50S/60S RIBOSOMAL PROTEIN L14/L23"/>
    <property type="match status" value="1"/>
</dbReference>
<dbReference type="PANTHER" id="PTHR11761:SF8">
    <property type="entry name" value="LARGE RIBOSOMAL SUBUNIT PROTEIN UL14"/>
    <property type="match status" value="1"/>
</dbReference>
<dbReference type="Pfam" id="PF00238">
    <property type="entry name" value="Ribosomal_L14"/>
    <property type="match status" value="1"/>
</dbReference>
<dbReference type="SMART" id="SM01374">
    <property type="entry name" value="Ribosomal_L14"/>
    <property type="match status" value="1"/>
</dbReference>
<dbReference type="SUPFAM" id="SSF50193">
    <property type="entry name" value="Ribosomal protein L14"/>
    <property type="match status" value="1"/>
</dbReference>
<dbReference type="PROSITE" id="PS00049">
    <property type="entry name" value="RIBOSOMAL_L14"/>
    <property type="match status" value="1"/>
</dbReference>
<gene>
    <name evidence="1" type="primary">rpl14</name>
    <name type="ordered locus">Nmar_0800</name>
</gene>
<evidence type="ECO:0000255" key="1">
    <source>
        <dbReference type="HAMAP-Rule" id="MF_01367"/>
    </source>
</evidence>
<evidence type="ECO:0000305" key="2"/>
<organism>
    <name type="scientific">Nitrosopumilus maritimus (strain SCM1)</name>
    <dbReference type="NCBI Taxonomy" id="436308"/>
    <lineage>
        <taxon>Archaea</taxon>
        <taxon>Nitrososphaerota</taxon>
        <taxon>Nitrososphaeria</taxon>
        <taxon>Nitrosopumilales</taxon>
        <taxon>Nitrosopumilaceae</taxon>
        <taxon>Nitrosopumilus</taxon>
    </lineage>
</organism>
<reference key="1">
    <citation type="journal article" date="2010" name="Proc. Natl. Acad. Sci. U.S.A.">
        <title>Nitrosopumilus maritimus genome reveals unique mechanisms for nitrification and autotrophy in globally distributed marine crenarchaea.</title>
        <authorList>
            <person name="Walker C.B."/>
            <person name="de la Torre J.R."/>
            <person name="Klotz M.G."/>
            <person name="Urakawa H."/>
            <person name="Pinel N."/>
            <person name="Arp D.J."/>
            <person name="Brochier-Armanet C."/>
            <person name="Chain P.S."/>
            <person name="Chan P.P."/>
            <person name="Gollabgir A."/>
            <person name="Hemp J."/>
            <person name="Hugler M."/>
            <person name="Karr E.A."/>
            <person name="Konneke M."/>
            <person name="Shin M."/>
            <person name="Lawton T.J."/>
            <person name="Lowe T."/>
            <person name="Martens-Habbena W."/>
            <person name="Sayavedra-Soto L.A."/>
            <person name="Lang D."/>
            <person name="Sievert S.M."/>
            <person name="Rosenzweig A.C."/>
            <person name="Manning G."/>
            <person name="Stahl D.A."/>
        </authorList>
    </citation>
    <scope>NUCLEOTIDE SEQUENCE [LARGE SCALE GENOMIC DNA]</scope>
    <source>
        <strain>SCM1</strain>
    </source>
</reference>
<keyword id="KW-1185">Reference proteome</keyword>
<keyword id="KW-0687">Ribonucleoprotein</keyword>
<keyword id="KW-0689">Ribosomal protein</keyword>
<keyword id="KW-0694">RNA-binding</keyword>
<keyword id="KW-0699">rRNA-binding</keyword>
<name>RL14_NITMS</name>